<name>RS3_META3</name>
<keyword id="KW-0687">Ribonucleoprotein</keyword>
<keyword id="KW-0689">Ribosomal protein</keyword>
<keyword id="KW-0694">RNA-binding</keyword>
<keyword id="KW-0699">rRNA-binding</keyword>
<reference key="1">
    <citation type="submission" date="2007-06" db="EMBL/GenBank/DDBJ databases">
        <title>Complete sequence of Methanococcus aeolicus Nankai-3.</title>
        <authorList>
            <consortium name="US DOE Joint Genome Institute"/>
            <person name="Copeland A."/>
            <person name="Lucas S."/>
            <person name="Lapidus A."/>
            <person name="Barry K."/>
            <person name="Glavina del Rio T."/>
            <person name="Dalin E."/>
            <person name="Tice H."/>
            <person name="Pitluck S."/>
            <person name="Chain P."/>
            <person name="Malfatti S."/>
            <person name="Shin M."/>
            <person name="Vergez L."/>
            <person name="Schmutz J."/>
            <person name="Larimer F."/>
            <person name="Land M."/>
            <person name="Hauser L."/>
            <person name="Kyrpides N."/>
            <person name="Lykidis A."/>
            <person name="Sieprawska-Lupa M."/>
            <person name="Whitman W.B."/>
            <person name="Richardson P."/>
        </authorList>
    </citation>
    <scope>NUCLEOTIDE SEQUENCE [LARGE SCALE GENOMIC DNA]</scope>
    <source>
        <strain>ATCC BAA-1280 / DSM 17508 / OCM 812 / Nankai-3</strain>
    </source>
</reference>
<accession>A6UWU3</accession>
<protein>
    <recommendedName>
        <fullName evidence="1">Small ribosomal subunit protein uS3</fullName>
    </recommendedName>
    <alternativeName>
        <fullName evidence="2">30S ribosomal protein S3</fullName>
    </alternativeName>
</protein>
<sequence length="208" mass="23161">MIERTFIKENVMETLVDEYLKNKLPRAGYSHMDVKKTPIGTRITVFAEKPGFVIGRKGKMVKELTETIATKYGVNKPQIEVKQIESPDLDAGVVAQKIASSLERGMHFRRVAHSAIRRVMAQGAKGVVVIVSGKLTGERSRTEKYMEGYMKHCGEPSEELVDQCHKIAKLKLGVVGVTVKIMPPEITLPDEIVIKDVPSKTTVETVEE</sequence>
<comment type="function">
    <text evidence="1">Binds the lower part of the 30S subunit head.</text>
</comment>
<comment type="subunit">
    <text evidence="1">Part of the 30S ribosomal subunit.</text>
</comment>
<comment type="similarity">
    <text evidence="1">Belongs to the universal ribosomal protein uS3 family.</text>
</comment>
<evidence type="ECO:0000255" key="1">
    <source>
        <dbReference type="HAMAP-Rule" id="MF_01309"/>
    </source>
</evidence>
<evidence type="ECO:0000305" key="2"/>
<feature type="chain" id="PRO_0000323314" description="Small ribosomal subunit protein uS3">
    <location>
        <begin position="1"/>
        <end position="208"/>
    </location>
</feature>
<feature type="domain" description="KH type-2" evidence="1">
    <location>
        <begin position="16"/>
        <end position="85"/>
    </location>
</feature>
<organism>
    <name type="scientific">Methanococcus aeolicus (strain ATCC BAA-1280 / DSM 17508 / OCM 812 / Nankai-3)</name>
    <dbReference type="NCBI Taxonomy" id="419665"/>
    <lineage>
        <taxon>Archaea</taxon>
        <taxon>Methanobacteriati</taxon>
        <taxon>Methanobacteriota</taxon>
        <taxon>Methanomada group</taxon>
        <taxon>Methanococci</taxon>
        <taxon>Methanococcales</taxon>
        <taxon>Methanococcaceae</taxon>
        <taxon>Methanococcus</taxon>
    </lineage>
</organism>
<gene>
    <name evidence="1" type="primary">rps3</name>
    <name type="ordered locus">Maeo_1389</name>
</gene>
<proteinExistence type="inferred from homology"/>
<dbReference type="EMBL" id="CP000743">
    <property type="protein sequence ID" value="ABR56965.1"/>
    <property type="molecule type" value="Genomic_DNA"/>
</dbReference>
<dbReference type="RefSeq" id="WP_011974097.1">
    <property type="nucleotide sequence ID" value="NC_009635.1"/>
</dbReference>
<dbReference type="SMR" id="A6UWU3"/>
<dbReference type="STRING" id="419665.Maeo_1389"/>
<dbReference type="GeneID" id="5326575"/>
<dbReference type="KEGG" id="mae:Maeo_1389"/>
<dbReference type="eggNOG" id="arCOG04097">
    <property type="taxonomic scope" value="Archaea"/>
</dbReference>
<dbReference type="HOGENOM" id="CLU_058591_1_1_2"/>
<dbReference type="OrthoDB" id="9126at2157"/>
<dbReference type="Proteomes" id="UP000001106">
    <property type="component" value="Chromosome"/>
</dbReference>
<dbReference type="GO" id="GO:0022627">
    <property type="term" value="C:cytosolic small ribosomal subunit"/>
    <property type="evidence" value="ECO:0007669"/>
    <property type="project" value="TreeGrafter"/>
</dbReference>
<dbReference type="GO" id="GO:0019843">
    <property type="term" value="F:rRNA binding"/>
    <property type="evidence" value="ECO:0007669"/>
    <property type="project" value="UniProtKB-UniRule"/>
</dbReference>
<dbReference type="GO" id="GO:0003735">
    <property type="term" value="F:structural constituent of ribosome"/>
    <property type="evidence" value="ECO:0007669"/>
    <property type="project" value="InterPro"/>
</dbReference>
<dbReference type="GO" id="GO:0006412">
    <property type="term" value="P:translation"/>
    <property type="evidence" value="ECO:0007669"/>
    <property type="project" value="UniProtKB-UniRule"/>
</dbReference>
<dbReference type="CDD" id="cd02411">
    <property type="entry name" value="KH-II_30S_S3_arch"/>
    <property type="match status" value="1"/>
</dbReference>
<dbReference type="FunFam" id="3.30.300.20:FF:000001">
    <property type="entry name" value="30S ribosomal protein S3"/>
    <property type="match status" value="1"/>
</dbReference>
<dbReference type="Gene3D" id="3.30.300.20">
    <property type="match status" value="1"/>
</dbReference>
<dbReference type="Gene3D" id="3.30.1140.32">
    <property type="entry name" value="Ribosomal protein S3, C-terminal domain"/>
    <property type="match status" value="1"/>
</dbReference>
<dbReference type="HAMAP" id="MF_01309_A">
    <property type="entry name" value="Ribosomal_uS3_A"/>
    <property type="match status" value="1"/>
</dbReference>
<dbReference type="InterPro" id="IPR004087">
    <property type="entry name" value="KH_dom"/>
</dbReference>
<dbReference type="InterPro" id="IPR015946">
    <property type="entry name" value="KH_dom-like_a/b"/>
</dbReference>
<dbReference type="InterPro" id="IPR004044">
    <property type="entry name" value="KH_dom_type_2"/>
</dbReference>
<dbReference type="InterPro" id="IPR009019">
    <property type="entry name" value="KH_sf_prok-type"/>
</dbReference>
<dbReference type="InterPro" id="IPR036419">
    <property type="entry name" value="Ribosomal_S3_C_sf"/>
</dbReference>
<dbReference type="InterPro" id="IPR027488">
    <property type="entry name" value="Ribosomal_uS3_arc"/>
</dbReference>
<dbReference type="InterPro" id="IPR001351">
    <property type="entry name" value="Ribosomal_uS3_C"/>
</dbReference>
<dbReference type="InterPro" id="IPR005703">
    <property type="entry name" value="Ribosomal_uS3_euk/arc"/>
</dbReference>
<dbReference type="NCBIfam" id="NF003219">
    <property type="entry name" value="PRK04191.1"/>
    <property type="match status" value="1"/>
</dbReference>
<dbReference type="NCBIfam" id="TIGR01008">
    <property type="entry name" value="uS3_euk_arch"/>
    <property type="match status" value="1"/>
</dbReference>
<dbReference type="PANTHER" id="PTHR11760">
    <property type="entry name" value="30S/40S RIBOSOMAL PROTEIN S3"/>
    <property type="match status" value="1"/>
</dbReference>
<dbReference type="PANTHER" id="PTHR11760:SF32">
    <property type="entry name" value="SMALL RIBOSOMAL SUBUNIT PROTEIN US3"/>
    <property type="match status" value="1"/>
</dbReference>
<dbReference type="Pfam" id="PF07650">
    <property type="entry name" value="KH_2"/>
    <property type="match status" value="1"/>
</dbReference>
<dbReference type="Pfam" id="PF00189">
    <property type="entry name" value="Ribosomal_S3_C"/>
    <property type="match status" value="1"/>
</dbReference>
<dbReference type="SMART" id="SM00322">
    <property type="entry name" value="KH"/>
    <property type="match status" value="1"/>
</dbReference>
<dbReference type="SUPFAM" id="SSF54814">
    <property type="entry name" value="Prokaryotic type KH domain (KH-domain type II)"/>
    <property type="match status" value="1"/>
</dbReference>
<dbReference type="SUPFAM" id="SSF54821">
    <property type="entry name" value="Ribosomal protein S3 C-terminal domain"/>
    <property type="match status" value="1"/>
</dbReference>
<dbReference type="PROSITE" id="PS50823">
    <property type="entry name" value="KH_TYPE_2"/>
    <property type="match status" value="1"/>
</dbReference>